<evidence type="ECO:0000255" key="1">
    <source>
        <dbReference type="PROSITE-ProRule" id="PRU00532"/>
    </source>
</evidence>
<evidence type="ECO:0000305" key="2"/>
<name>YEDL_ECOLI</name>
<comment type="similarity">
    <text evidence="2">Belongs to the acetyltransferase family.</text>
</comment>
<proteinExistence type="inferred from homology"/>
<sequence length="159" mass="17891">MFTIKTDDLTHPAVQALVAYHISGMLQQSPPESSHALDVQKLRNPTVTFWSVWEGEQLAGIGALKLLDDKHGELKSMRTAPNYLRRGVASLILRHILQVAQDRCLHRLSLETGTQAGFTACHQLYLKHGFADCEPFADYRLDPHSRFLSLTLCENNELP</sequence>
<feature type="chain" id="PRO_0000074609" description="Uncharacterized N-acetyltransferase YedL">
    <location>
        <begin position="1"/>
        <end position="159"/>
    </location>
</feature>
<feature type="domain" description="N-acetyltransferase" evidence="1">
    <location>
        <begin position="4"/>
        <end position="153"/>
    </location>
</feature>
<protein>
    <recommendedName>
        <fullName>Uncharacterized N-acetyltransferase YedL</fullName>
        <ecNumber>2.3.1.-</ecNumber>
    </recommendedName>
</protein>
<accession>P76319</accession>
<accession>Q2MB04</accession>
<dbReference type="EC" id="2.3.1.-"/>
<dbReference type="EMBL" id="L13279">
    <property type="status" value="NOT_ANNOTATED_CDS"/>
    <property type="molecule type" value="Genomic_DNA"/>
</dbReference>
<dbReference type="EMBL" id="U00096">
    <property type="protein sequence ID" value="AAC74999.1"/>
    <property type="molecule type" value="Genomic_DNA"/>
</dbReference>
<dbReference type="EMBL" id="AP009048">
    <property type="protein sequence ID" value="BAE76552.1"/>
    <property type="molecule type" value="Genomic_DNA"/>
</dbReference>
<dbReference type="PIR" id="A64957">
    <property type="entry name" value="A64957"/>
</dbReference>
<dbReference type="RefSeq" id="NP_416442.1">
    <property type="nucleotide sequence ID" value="NC_000913.3"/>
</dbReference>
<dbReference type="RefSeq" id="WP_000494172.1">
    <property type="nucleotide sequence ID" value="NZ_LN832404.1"/>
</dbReference>
<dbReference type="SMR" id="P76319"/>
<dbReference type="BioGRID" id="4261040">
    <property type="interactions" value="11"/>
</dbReference>
<dbReference type="FunCoup" id="P76319">
    <property type="interactions" value="67"/>
</dbReference>
<dbReference type="IntAct" id="P76319">
    <property type="interactions" value="2"/>
</dbReference>
<dbReference type="STRING" id="511145.b1932"/>
<dbReference type="PaxDb" id="511145-b1932"/>
<dbReference type="EnsemblBacteria" id="AAC74999">
    <property type="protein sequence ID" value="AAC74999"/>
    <property type="gene ID" value="b1932"/>
</dbReference>
<dbReference type="GeneID" id="946437"/>
<dbReference type="KEGG" id="ecj:JW1917"/>
<dbReference type="KEGG" id="eco:b1932"/>
<dbReference type="KEGG" id="ecoc:C3026_10955"/>
<dbReference type="PATRIC" id="fig|1411691.4.peg.317"/>
<dbReference type="EchoBASE" id="EB3064"/>
<dbReference type="eggNOG" id="COG0454">
    <property type="taxonomic scope" value="Bacteria"/>
</dbReference>
<dbReference type="HOGENOM" id="CLU_013985_11_8_6"/>
<dbReference type="InParanoid" id="P76319"/>
<dbReference type="OMA" id="ADMYATS"/>
<dbReference type="OrthoDB" id="9803233at2"/>
<dbReference type="PhylomeDB" id="P76319"/>
<dbReference type="BioCyc" id="EcoCyc:G7040-MONOMER"/>
<dbReference type="PRO" id="PR:P76319"/>
<dbReference type="Proteomes" id="UP000000625">
    <property type="component" value="Chromosome"/>
</dbReference>
<dbReference type="GO" id="GO:0016747">
    <property type="term" value="F:acyltransferase activity, transferring groups other than amino-acyl groups"/>
    <property type="evidence" value="ECO:0007669"/>
    <property type="project" value="InterPro"/>
</dbReference>
<dbReference type="CDD" id="cd04301">
    <property type="entry name" value="NAT_SF"/>
    <property type="match status" value="1"/>
</dbReference>
<dbReference type="Gene3D" id="3.40.630.30">
    <property type="match status" value="1"/>
</dbReference>
<dbReference type="InterPro" id="IPR016181">
    <property type="entry name" value="Acyl_CoA_acyltransferase"/>
</dbReference>
<dbReference type="InterPro" id="IPR050832">
    <property type="entry name" value="Bact_Acetyltransf"/>
</dbReference>
<dbReference type="InterPro" id="IPR000182">
    <property type="entry name" value="GNAT_dom"/>
</dbReference>
<dbReference type="PANTHER" id="PTHR43877">
    <property type="entry name" value="AMINOALKYLPHOSPHONATE N-ACETYLTRANSFERASE-RELATED-RELATED"/>
    <property type="match status" value="1"/>
</dbReference>
<dbReference type="PANTHER" id="PTHR43877:SF5">
    <property type="entry name" value="BLL8307 PROTEIN"/>
    <property type="match status" value="1"/>
</dbReference>
<dbReference type="Pfam" id="PF00583">
    <property type="entry name" value="Acetyltransf_1"/>
    <property type="match status" value="1"/>
</dbReference>
<dbReference type="SUPFAM" id="SSF55729">
    <property type="entry name" value="Acyl-CoA N-acyltransferases (Nat)"/>
    <property type="match status" value="1"/>
</dbReference>
<dbReference type="PROSITE" id="PS51186">
    <property type="entry name" value="GNAT"/>
    <property type="match status" value="1"/>
</dbReference>
<reference key="1">
    <citation type="journal article" date="1993" name="J. Gen. Microbiol.">
        <title>Organization of the Escherichia coli and Salmonella typhimurium chromosomes between flagellar regions IIIa and IIIb, including a large non-coding region.</title>
        <authorList>
            <person name="Raha M."/>
            <person name="Kihara M."/>
            <person name="Kawagishi I."/>
            <person name="Macnab R.M."/>
        </authorList>
    </citation>
    <scope>NUCLEOTIDE SEQUENCE [GENOMIC DNA]</scope>
    <source>
        <strain>JA11</strain>
    </source>
</reference>
<reference key="2">
    <citation type="journal article" date="1997" name="Science">
        <title>The complete genome sequence of Escherichia coli K-12.</title>
        <authorList>
            <person name="Blattner F.R."/>
            <person name="Plunkett G. III"/>
            <person name="Bloch C.A."/>
            <person name="Perna N.T."/>
            <person name="Burland V."/>
            <person name="Riley M."/>
            <person name="Collado-Vides J."/>
            <person name="Glasner J.D."/>
            <person name="Rode C.K."/>
            <person name="Mayhew G.F."/>
            <person name="Gregor J."/>
            <person name="Davis N.W."/>
            <person name="Kirkpatrick H.A."/>
            <person name="Goeden M.A."/>
            <person name="Rose D.J."/>
            <person name="Mau B."/>
            <person name="Shao Y."/>
        </authorList>
    </citation>
    <scope>NUCLEOTIDE SEQUENCE [LARGE SCALE GENOMIC DNA]</scope>
    <source>
        <strain>K12 / MG1655 / ATCC 47076</strain>
    </source>
</reference>
<reference key="3">
    <citation type="journal article" date="2006" name="Mol. Syst. Biol.">
        <title>Highly accurate genome sequences of Escherichia coli K-12 strains MG1655 and W3110.</title>
        <authorList>
            <person name="Hayashi K."/>
            <person name="Morooka N."/>
            <person name="Yamamoto Y."/>
            <person name="Fujita K."/>
            <person name="Isono K."/>
            <person name="Choi S."/>
            <person name="Ohtsubo E."/>
            <person name="Baba T."/>
            <person name="Wanner B.L."/>
            <person name="Mori H."/>
            <person name="Horiuchi T."/>
        </authorList>
    </citation>
    <scope>NUCLEOTIDE SEQUENCE [LARGE SCALE GENOMIC DNA]</scope>
    <source>
        <strain>K12 / W3110 / ATCC 27325 / DSM 5911</strain>
    </source>
</reference>
<organism>
    <name type="scientific">Escherichia coli (strain K12)</name>
    <dbReference type="NCBI Taxonomy" id="83333"/>
    <lineage>
        <taxon>Bacteria</taxon>
        <taxon>Pseudomonadati</taxon>
        <taxon>Pseudomonadota</taxon>
        <taxon>Gammaproteobacteria</taxon>
        <taxon>Enterobacterales</taxon>
        <taxon>Enterobacteriaceae</taxon>
        <taxon>Escherichia</taxon>
    </lineage>
</organism>
<keyword id="KW-0012">Acyltransferase</keyword>
<keyword id="KW-1185">Reference proteome</keyword>
<keyword id="KW-0808">Transferase</keyword>
<gene>
    <name type="primary">yedL</name>
    <name type="ordered locus">b1932</name>
    <name type="ordered locus">JW1917</name>
</gene>